<name>HLDE_SHIDS</name>
<organism>
    <name type="scientific">Shigella dysenteriae serotype 1 (strain Sd197)</name>
    <dbReference type="NCBI Taxonomy" id="300267"/>
    <lineage>
        <taxon>Bacteria</taxon>
        <taxon>Pseudomonadati</taxon>
        <taxon>Pseudomonadota</taxon>
        <taxon>Gammaproteobacteria</taxon>
        <taxon>Enterobacterales</taxon>
        <taxon>Enterobacteriaceae</taxon>
        <taxon>Shigella</taxon>
    </lineage>
</organism>
<comment type="function">
    <text evidence="1">Catalyzes the phosphorylation of D-glycero-D-manno-heptose 7-phosphate at the C-1 position to selectively form D-glycero-beta-D-manno-heptose-1,7-bisphosphate.</text>
</comment>
<comment type="function">
    <text evidence="1">Catalyzes the ADP transfer from ATP to D-glycero-beta-D-manno-heptose 1-phosphate, yielding ADP-D-glycero-beta-D-manno-heptose.</text>
</comment>
<comment type="catalytic activity">
    <reaction evidence="1">
        <text>D-glycero-beta-D-manno-heptose 7-phosphate + ATP = D-glycero-beta-D-manno-heptose 1,7-bisphosphate + ADP + H(+)</text>
        <dbReference type="Rhea" id="RHEA:27473"/>
        <dbReference type="ChEBI" id="CHEBI:15378"/>
        <dbReference type="ChEBI" id="CHEBI:30616"/>
        <dbReference type="ChEBI" id="CHEBI:60204"/>
        <dbReference type="ChEBI" id="CHEBI:60208"/>
        <dbReference type="ChEBI" id="CHEBI:456216"/>
        <dbReference type="EC" id="2.7.1.167"/>
    </reaction>
</comment>
<comment type="catalytic activity">
    <reaction evidence="1">
        <text>D-glycero-beta-D-manno-heptose 1-phosphate + ATP + H(+) = ADP-D-glycero-beta-D-manno-heptose + diphosphate</text>
        <dbReference type="Rhea" id="RHEA:27465"/>
        <dbReference type="ChEBI" id="CHEBI:15378"/>
        <dbReference type="ChEBI" id="CHEBI:30616"/>
        <dbReference type="ChEBI" id="CHEBI:33019"/>
        <dbReference type="ChEBI" id="CHEBI:59967"/>
        <dbReference type="ChEBI" id="CHEBI:61593"/>
        <dbReference type="EC" id="2.7.7.70"/>
    </reaction>
</comment>
<comment type="pathway">
    <text evidence="1">Nucleotide-sugar biosynthesis; ADP-L-glycero-beta-D-manno-heptose biosynthesis; ADP-L-glycero-beta-D-manno-heptose from D-glycero-beta-D-manno-heptose 7-phosphate: step 1/4.</text>
</comment>
<comment type="pathway">
    <text evidence="1">Nucleotide-sugar biosynthesis; ADP-L-glycero-beta-D-manno-heptose biosynthesis; ADP-L-glycero-beta-D-manno-heptose from D-glycero-beta-D-manno-heptose 7-phosphate: step 3/4.</text>
</comment>
<comment type="subunit">
    <text evidence="1">Homodimer.</text>
</comment>
<comment type="similarity">
    <text evidence="1">In the N-terminal section; belongs to the carbohydrate kinase PfkB family.</text>
</comment>
<comment type="similarity">
    <text evidence="1">In the C-terminal section; belongs to the cytidylyltransferase family.</text>
</comment>
<protein>
    <recommendedName>
        <fullName evidence="1">Bifunctional protein HldE</fullName>
    </recommendedName>
    <domain>
        <recommendedName>
            <fullName evidence="1">D-beta-D-heptose 7-phosphate kinase</fullName>
            <ecNumber evidence="1">2.7.1.167</ecNumber>
        </recommendedName>
        <alternativeName>
            <fullName evidence="1">D-beta-D-heptose 7-phosphotransferase</fullName>
        </alternativeName>
        <alternativeName>
            <fullName evidence="1">D-glycero-beta-D-manno-heptose-7-phosphate kinase</fullName>
        </alternativeName>
    </domain>
    <domain>
        <recommendedName>
            <fullName evidence="1">D-beta-D-heptose 1-phosphate adenylyltransferase</fullName>
            <ecNumber evidence="1">2.7.7.70</ecNumber>
        </recommendedName>
        <alternativeName>
            <fullName evidence="1">D-glycero-beta-D-manno-heptose 1-phosphate adenylyltransferase</fullName>
        </alternativeName>
    </domain>
</protein>
<gene>
    <name evidence="1" type="primary">hldE</name>
    <name type="ordered locus">SDY_3235</name>
</gene>
<accession>Q32BR2</accession>
<reference key="1">
    <citation type="journal article" date="2005" name="Nucleic Acids Res.">
        <title>Genome dynamics and diversity of Shigella species, the etiologic agents of bacillary dysentery.</title>
        <authorList>
            <person name="Yang F."/>
            <person name="Yang J."/>
            <person name="Zhang X."/>
            <person name="Chen L."/>
            <person name="Jiang Y."/>
            <person name="Yan Y."/>
            <person name="Tang X."/>
            <person name="Wang J."/>
            <person name="Xiong Z."/>
            <person name="Dong J."/>
            <person name="Xue Y."/>
            <person name="Zhu Y."/>
            <person name="Xu X."/>
            <person name="Sun L."/>
            <person name="Chen S."/>
            <person name="Nie H."/>
            <person name="Peng J."/>
            <person name="Xu J."/>
            <person name="Wang Y."/>
            <person name="Yuan Z."/>
            <person name="Wen Y."/>
            <person name="Yao Z."/>
            <person name="Shen Y."/>
            <person name="Qiang B."/>
            <person name="Hou Y."/>
            <person name="Yu J."/>
            <person name="Jin Q."/>
        </authorList>
    </citation>
    <scope>NUCLEOTIDE SEQUENCE [LARGE SCALE GENOMIC DNA]</scope>
    <source>
        <strain>Sd197</strain>
    </source>
</reference>
<sequence length="477" mass="51095">MKVTLPEFERAGVMVVGDVMLDRYWYGPTSRISPEAPVPVVKVNTIEERPGGAANVAMNITSLGANARLVGLTGIDDAARALSKSLADVNVKCDFVSVPTHPTITKLRVLSRNQQLIRLDFEEGFEGVDPQPLHERINQALSSIGALVLSDYAKGALASVQQMIQLARKAGVPVLIDPKGTDFERYRGATLLTPNLSEFEAVVGKCKTEEEIVERGMKLIADYELSALLVTRSEQGMSLLQPGKAPLHMPTQAQEVYDVTGAGDTVIGVLAATLAAGNSLEEACFFANAAAGVVVGKLGTSTVSPIELENAVRGRAETGFGVMTEEELKLAVAAARKRGEKVVMTNGVFDILHAGHVSYLANARKLGDRLIVAVNSDASTKRLKGDSRPVNPLEQRMIVLGALEAVDWVVSFEEDTPQRLIAGILPDLLVKGGDYKPEEIAGSKEVWANGGEVLVLNFEDGCSTTNIIKKIQQDKKG</sequence>
<dbReference type="EC" id="2.7.1.167" evidence="1"/>
<dbReference type="EC" id="2.7.7.70" evidence="1"/>
<dbReference type="EMBL" id="CP000034">
    <property type="protein sequence ID" value="ABB63243.1"/>
    <property type="molecule type" value="Genomic_DNA"/>
</dbReference>
<dbReference type="RefSeq" id="WP_000869201.1">
    <property type="nucleotide sequence ID" value="NC_007606.1"/>
</dbReference>
<dbReference type="RefSeq" id="YP_404734.1">
    <property type="nucleotide sequence ID" value="NC_007606.1"/>
</dbReference>
<dbReference type="SMR" id="Q32BR2"/>
<dbReference type="STRING" id="300267.SDY_3235"/>
<dbReference type="EnsemblBacteria" id="ABB63243">
    <property type="protein sequence ID" value="ABB63243"/>
    <property type="gene ID" value="SDY_3235"/>
</dbReference>
<dbReference type="KEGG" id="sdy:SDY_3235"/>
<dbReference type="PATRIC" id="fig|300267.13.peg.3864"/>
<dbReference type="HOGENOM" id="CLU_021150_2_1_6"/>
<dbReference type="UniPathway" id="UPA00356">
    <property type="reaction ID" value="UER00437"/>
</dbReference>
<dbReference type="UniPathway" id="UPA00356">
    <property type="reaction ID" value="UER00439"/>
</dbReference>
<dbReference type="Proteomes" id="UP000002716">
    <property type="component" value="Chromosome"/>
</dbReference>
<dbReference type="GO" id="GO:0005829">
    <property type="term" value="C:cytosol"/>
    <property type="evidence" value="ECO:0007669"/>
    <property type="project" value="TreeGrafter"/>
</dbReference>
<dbReference type="GO" id="GO:0005524">
    <property type="term" value="F:ATP binding"/>
    <property type="evidence" value="ECO:0007669"/>
    <property type="project" value="UniProtKB-UniRule"/>
</dbReference>
<dbReference type="GO" id="GO:0033785">
    <property type="term" value="F:heptose 7-phosphate kinase activity"/>
    <property type="evidence" value="ECO:0007669"/>
    <property type="project" value="UniProtKB-UniRule"/>
</dbReference>
<dbReference type="GO" id="GO:0033786">
    <property type="term" value="F:heptose-1-phosphate adenylyltransferase activity"/>
    <property type="evidence" value="ECO:0007669"/>
    <property type="project" value="UniProtKB-UniRule"/>
</dbReference>
<dbReference type="GO" id="GO:0016773">
    <property type="term" value="F:phosphotransferase activity, alcohol group as acceptor"/>
    <property type="evidence" value="ECO:0007669"/>
    <property type="project" value="InterPro"/>
</dbReference>
<dbReference type="GO" id="GO:0097171">
    <property type="term" value="P:ADP-L-glycero-beta-D-manno-heptose biosynthetic process"/>
    <property type="evidence" value="ECO:0007669"/>
    <property type="project" value="UniProtKB-UniPathway"/>
</dbReference>
<dbReference type="CDD" id="cd01172">
    <property type="entry name" value="RfaE_like"/>
    <property type="match status" value="1"/>
</dbReference>
<dbReference type="FunFam" id="3.40.1190.20:FF:000002">
    <property type="entry name" value="Bifunctional protein HldE"/>
    <property type="match status" value="1"/>
</dbReference>
<dbReference type="FunFam" id="3.40.50.620:FF:000028">
    <property type="entry name" value="Bifunctional protein HldE"/>
    <property type="match status" value="1"/>
</dbReference>
<dbReference type="Gene3D" id="3.40.1190.20">
    <property type="match status" value="1"/>
</dbReference>
<dbReference type="Gene3D" id="3.40.50.620">
    <property type="entry name" value="HUPs"/>
    <property type="match status" value="1"/>
</dbReference>
<dbReference type="HAMAP" id="MF_01603">
    <property type="entry name" value="HldE"/>
    <property type="match status" value="1"/>
</dbReference>
<dbReference type="InterPro" id="IPR023030">
    <property type="entry name" value="Bifunc_HldE"/>
</dbReference>
<dbReference type="InterPro" id="IPR002173">
    <property type="entry name" value="Carboh/pur_kinase_PfkB_CS"/>
</dbReference>
<dbReference type="InterPro" id="IPR004821">
    <property type="entry name" value="Cyt_trans-like"/>
</dbReference>
<dbReference type="InterPro" id="IPR011611">
    <property type="entry name" value="PfkB_dom"/>
</dbReference>
<dbReference type="InterPro" id="IPR011913">
    <property type="entry name" value="RfaE_dom_I"/>
</dbReference>
<dbReference type="InterPro" id="IPR011914">
    <property type="entry name" value="RfaE_dom_II"/>
</dbReference>
<dbReference type="InterPro" id="IPR029056">
    <property type="entry name" value="Ribokinase-like"/>
</dbReference>
<dbReference type="InterPro" id="IPR014729">
    <property type="entry name" value="Rossmann-like_a/b/a_fold"/>
</dbReference>
<dbReference type="NCBIfam" id="TIGR00125">
    <property type="entry name" value="cyt_tran_rel"/>
    <property type="match status" value="1"/>
</dbReference>
<dbReference type="NCBIfam" id="NF008454">
    <property type="entry name" value="PRK11316.1"/>
    <property type="match status" value="1"/>
</dbReference>
<dbReference type="NCBIfam" id="TIGR02198">
    <property type="entry name" value="rfaE_dom_I"/>
    <property type="match status" value="1"/>
</dbReference>
<dbReference type="NCBIfam" id="TIGR02199">
    <property type="entry name" value="rfaE_dom_II"/>
    <property type="match status" value="1"/>
</dbReference>
<dbReference type="PANTHER" id="PTHR46969">
    <property type="entry name" value="BIFUNCTIONAL PROTEIN HLDE"/>
    <property type="match status" value="1"/>
</dbReference>
<dbReference type="PANTHER" id="PTHR46969:SF1">
    <property type="entry name" value="BIFUNCTIONAL PROTEIN HLDE"/>
    <property type="match status" value="1"/>
</dbReference>
<dbReference type="Pfam" id="PF01467">
    <property type="entry name" value="CTP_transf_like"/>
    <property type="match status" value="1"/>
</dbReference>
<dbReference type="Pfam" id="PF00294">
    <property type="entry name" value="PfkB"/>
    <property type="match status" value="1"/>
</dbReference>
<dbReference type="SUPFAM" id="SSF52374">
    <property type="entry name" value="Nucleotidylyl transferase"/>
    <property type="match status" value="1"/>
</dbReference>
<dbReference type="SUPFAM" id="SSF53613">
    <property type="entry name" value="Ribokinase-like"/>
    <property type="match status" value="1"/>
</dbReference>
<dbReference type="PROSITE" id="PS00583">
    <property type="entry name" value="PFKB_KINASES_1"/>
    <property type="match status" value="1"/>
</dbReference>
<keyword id="KW-0007">Acetylation</keyword>
<keyword id="KW-0067">ATP-binding</keyword>
<keyword id="KW-0119">Carbohydrate metabolism</keyword>
<keyword id="KW-0418">Kinase</keyword>
<keyword id="KW-0511">Multifunctional enzyme</keyword>
<keyword id="KW-0547">Nucleotide-binding</keyword>
<keyword id="KW-0548">Nucleotidyltransferase</keyword>
<keyword id="KW-1185">Reference proteome</keyword>
<keyword id="KW-0808">Transferase</keyword>
<feature type="chain" id="PRO_0000255783" description="Bifunctional protein HldE">
    <location>
        <begin position="1"/>
        <end position="477"/>
    </location>
</feature>
<feature type="region of interest" description="Ribokinase">
    <location>
        <begin position="1"/>
        <end position="318"/>
    </location>
</feature>
<feature type="region of interest" description="Cytidylyltransferase">
    <location>
        <begin position="344"/>
        <end position="477"/>
    </location>
</feature>
<feature type="active site" evidence="1">
    <location>
        <position position="264"/>
    </location>
</feature>
<feature type="binding site" evidence="1">
    <location>
        <begin position="195"/>
        <end position="198"/>
    </location>
    <ligand>
        <name>ATP</name>
        <dbReference type="ChEBI" id="CHEBI:30616"/>
    </ligand>
</feature>
<feature type="modified residue" description="N6-acetyllysine" evidence="1">
    <location>
        <position position="179"/>
    </location>
</feature>
<proteinExistence type="inferred from homology"/>
<evidence type="ECO:0000255" key="1">
    <source>
        <dbReference type="HAMAP-Rule" id="MF_01603"/>
    </source>
</evidence>